<comment type="function">
    <text>Can hydrolyze salicin, cellobiose, and probably arbutin.</text>
</comment>
<comment type="catalytic activity">
    <reaction>
        <text>6-phospho-beta-D-glucosyl-(1-&gt;4)-D-glucose + H2O = D-glucose 6-phosphate + D-glucose</text>
        <dbReference type="Rhea" id="RHEA:10772"/>
        <dbReference type="ChEBI" id="CHEBI:4167"/>
        <dbReference type="ChEBI" id="CHEBI:15377"/>
        <dbReference type="ChEBI" id="CHEBI:58312"/>
        <dbReference type="ChEBI" id="CHEBI:61548"/>
        <dbReference type="EC" id="3.2.1.86"/>
    </reaction>
</comment>
<comment type="similarity">
    <text evidence="3">Belongs to the glycosyl hydrolase 1 family.</text>
</comment>
<comment type="sequence caution" evidence="3">
    <conflict type="erroneous initiation">
        <sequence resource="EMBL-CDS" id="AAA69226"/>
    </conflict>
</comment>
<keyword id="KW-0326">Glycosidase</keyword>
<keyword id="KW-0378">Hydrolase</keyword>
<keyword id="KW-1185">Reference proteome</keyword>
<evidence type="ECO:0000255" key="1"/>
<evidence type="ECO:0000255" key="2">
    <source>
        <dbReference type="PROSITE-ProRule" id="PRU10055"/>
    </source>
</evidence>
<evidence type="ECO:0000305" key="3"/>
<dbReference type="EC" id="3.2.1.86"/>
<dbReference type="EMBL" id="M73326">
    <property type="protein sequence ID" value="AAA16430.1"/>
    <property type="molecule type" value="Unassigned_DNA"/>
</dbReference>
<dbReference type="EMBL" id="U29579">
    <property type="protein sequence ID" value="AAA69226.1"/>
    <property type="status" value="ALT_INIT"/>
    <property type="molecule type" value="Genomic_DNA"/>
</dbReference>
<dbReference type="EMBL" id="U00096">
    <property type="protein sequence ID" value="AAC75758.1"/>
    <property type="molecule type" value="Genomic_DNA"/>
</dbReference>
<dbReference type="EMBL" id="AP009048">
    <property type="protein sequence ID" value="BAE76793.1"/>
    <property type="molecule type" value="Genomic_DNA"/>
</dbReference>
<dbReference type="PIR" id="H65051">
    <property type="entry name" value="H65051"/>
</dbReference>
<dbReference type="RefSeq" id="NP_417196.1">
    <property type="nucleotide sequence ID" value="NC_000913.3"/>
</dbReference>
<dbReference type="RefSeq" id="WP_000110363.1">
    <property type="nucleotide sequence ID" value="NZ_STEB01000027.1"/>
</dbReference>
<dbReference type="SMR" id="P24240"/>
<dbReference type="BioGRID" id="4259428">
    <property type="interactions" value="25"/>
</dbReference>
<dbReference type="FunCoup" id="P24240">
    <property type="interactions" value="430"/>
</dbReference>
<dbReference type="IntAct" id="P24240">
    <property type="interactions" value="5"/>
</dbReference>
<dbReference type="STRING" id="511145.b2716"/>
<dbReference type="CAZy" id="GH1">
    <property type="family name" value="Glycoside Hydrolase Family 1"/>
</dbReference>
<dbReference type="PaxDb" id="511145-b2716"/>
<dbReference type="EnsemblBacteria" id="AAC75758">
    <property type="protein sequence ID" value="AAC75758"/>
    <property type="gene ID" value="b2716"/>
</dbReference>
<dbReference type="GeneID" id="947460"/>
<dbReference type="KEGG" id="ecj:JW2686"/>
<dbReference type="KEGG" id="eco:b2716"/>
<dbReference type="PATRIC" id="fig|1411691.4.peg.4025"/>
<dbReference type="EchoBASE" id="EB0083"/>
<dbReference type="eggNOG" id="COG2723">
    <property type="taxonomic scope" value="Bacteria"/>
</dbReference>
<dbReference type="HOGENOM" id="CLU_001859_0_2_6"/>
<dbReference type="InParanoid" id="P24240"/>
<dbReference type="OMA" id="IAHEINP"/>
<dbReference type="OrthoDB" id="9765195at2"/>
<dbReference type="PhylomeDB" id="P24240"/>
<dbReference type="BioCyc" id="EcoCyc:EG10085-MONOMER"/>
<dbReference type="BioCyc" id="MetaCyc:EG10085-MONOMER"/>
<dbReference type="PRO" id="PR:P24240"/>
<dbReference type="Proteomes" id="UP000000625">
    <property type="component" value="Chromosome"/>
</dbReference>
<dbReference type="GO" id="GO:0005829">
    <property type="term" value="C:cytosol"/>
    <property type="evidence" value="ECO:0000318"/>
    <property type="project" value="GO_Central"/>
</dbReference>
<dbReference type="GO" id="GO:0008706">
    <property type="term" value="F:6-phospho-beta-glucosidase activity"/>
    <property type="evidence" value="ECO:0007669"/>
    <property type="project" value="UniProtKB-EC"/>
</dbReference>
<dbReference type="GO" id="GO:0008422">
    <property type="term" value="F:beta-glucosidase activity"/>
    <property type="evidence" value="ECO:0000318"/>
    <property type="project" value="GO_Central"/>
</dbReference>
<dbReference type="GO" id="GO:0016052">
    <property type="term" value="P:carbohydrate catabolic process"/>
    <property type="evidence" value="ECO:0000318"/>
    <property type="project" value="GO_Central"/>
</dbReference>
<dbReference type="GO" id="GO:2000892">
    <property type="term" value="P:cellobiose catabolic process"/>
    <property type="evidence" value="ECO:0000315"/>
    <property type="project" value="EcoCyc"/>
</dbReference>
<dbReference type="FunFam" id="3.20.20.80:FF:000004">
    <property type="entry name" value="Beta-glucosidase 6-phospho-beta-glucosidase"/>
    <property type="match status" value="1"/>
</dbReference>
<dbReference type="Gene3D" id="3.20.20.80">
    <property type="entry name" value="Glycosidases"/>
    <property type="match status" value="1"/>
</dbReference>
<dbReference type="InterPro" id="IPR001360">
    <property type="entry name" value="Glyco_hydro_1"/>
</dbReference>
<dbReference type="InterPro" id="IPR018120">
    <property type="entry name" value="Glyco_hydro_1_AS"/>
</dbReference>
<dbReference type="InterPro" id="IPR033132">
    <property type="entry name" value="Glyco_hydro_1_N_CS"/>
</dbReference>
<dbReference type="InterPro" id="IPR017853">
    <property type="entry name" value="Glycoside_hydrolase_SF"/>
</dbReference>
<dbReference type="NCBIfam" id="NF007158">
    <property type="entry name" value="PRK09593.1"/>
    <property type="match status" value="1"/>
</dbReference>
<dbReference type="NCBIfam" id="NF007356">
    <property type="entry name" value="PRK09852.1"/>
    <property type="match status" value="1"/>
</dbReference>
<dbReference type="PANTHER" id="PTHR10353:SF122">
    <property type="entry name" value="6-PHOSPHO-BETA-GLUCOSIDASE ASCB-RELATED"/>
    <property type="match status" value="1"/>
</dbReference>
<dbReference type="PANTHER" id="PTHR10353">
    <property type="entry name" value="GLYCOSYL HYDROLASE"/>
    <property type="match status" value="1"/>
</dbReference>
<dbReference type="Pfam" id="PF00232">
    <property type="entry name" value="Glyco_hydro_1"/>
    <property type="match status" value="1"/>
</dbReference>
<dbReference type="PRINTS" id="PR00131">
    <property type="entry name" value="GLHYDRLASE1"/>
</dbReference>
<dbReference type="SUPFAM" id="SSF51445">
    <property type="entry name" value="(Trans)glycosidases"/>
    <property type="match status" value="1"/>
</dbReference>
<dbReference type="PROSITE" id="PS00572">
    <property type="entry name" value="GLYCOSYL_HYDROL_F1_1"/>
    <property type="match status" value="1"/>
</dbReference>
<dbReference type="PROSITE" id="PS00653">
    <property type="entry name" value="GLYCOSYL_HYDROL_F1_2"/>
    <property type="match status" value="1"/>
</dbReference>
<protein>
    <recommendedName>
        <fullName>6-phospho-beta-glucosidase AscB</fullName>
        <ecNumber>3.2.1.86</ecNumber>
    </recommendedName>
</protein>
<feature type="chain" id="PRO_0000063895" description="6-phospho-beta-glucosidase AscB">
    <location>
        <begin position="1"/>
        <end position="474"/>
    </location>
</feature>
<feature type="active site" description="Proton donor" evidence="1">
    <location>
        <position position="180"/>
    </location>
</feature>
<feature type="active site" description="Nucleophile" evidence="2">
    <location>
        <position position="372"/>
    </location>
</feature>
<feature type="sequence conflict" description="In Ref. 1; AAA16430." evidence="3" ref="1">
    <original>EA</original>
    <variation>GT</variation>
    <location>
        <begin position="405"/>
        <end position="406"/>
    </location>
</feature>
<feature type="sequence conflict" description="In Ref. 1; AAA16430." evidence="3" ref="1">
    <original>S</original>
    <variation>C</variation>
    <location>
        <position position="428"/>
    </location>
</feature>
<feature type="sequence conflict" description="In Ref. 1; AAA16430." evidence="3" ref="1">
    <original>RK</original>
    <variation>HR</variation>
    <location>
        <begin position="455"/>
        <end position="456"/>
    </location>
</feature>
<reference key="1">
    <citation type="journal article" date="1992" name="Mol. Biol. Evol.">
        <title>Nucleotide sequence, function, activation, and evolution of the cryptic asc operon of Escherichia coli K12.</title>
        <authorList>
            <person name="Hall B.G."/>
            <person name="Xu L."/>
        </authorList>
    </citation>
    <scope>NUCLEOTIDE SEQUENCE [GENOMIC DNA]</scope>
    <source>
        <strain>K12</strain>
    </source>
</reference>
<reference key="2">
    <citation type="journal article" date="1997" name="Science">
        <title>The complete genome sequence of Escherichia coli K-12.</title>
        <authorList>
            <person name="Blattner F.R."/>
            <person name="Plunkett G. III"/>
            <person name="Bloch C.A."/>
            <person name="Perna N.T."/>
            <person name="Burland V."/>
            <person name="Riley M."/>
            <person name="Collado-Vides J."/>
            <person name="Glasner J.D."/>
            <person name="Rode C.K."/>
            <person name="Mayhew G.F."/>
            <person name="Gregor J."/>
            <person name="Davis N.W."/>
            <person name="Kirkpatrick H.A."/>
            <person name="Goeden M.A."/>
            <person name="Rose D.J."/>
            <person name="Mau B."/>
            <person name="Shao Y."/>
        </authorList>
    </citation>
    <scope>NUCLEOTIDE SEQUENCE [LARGE SCALE GENOMIC DNA]</scope>
    <source>
        <strain>K12 / MG1655 / ATCC 47076</strain>
    </source>
</reference>
<reference key="3">
    <citation type="journal article" date="2006" name="Mol. Syst. Biol.">
        <title>Highly accurate genome sequences of Escherichia coli K-12 strains MG1655 and W3110.</title>
        <authorList>
            <person name="Hayashi K."/>
            <person name="Morooka N."/>
            <person name="Yamamoto Y."/>
            <person name="Fujita K."/>
            <person name="Isono K."/>
            <person name="Choi S."/>
            <person name="Ohtsubo E."/>
            <person name="Baba T."/>
            <person name="Wanner B.L."/>
            <person name="Mori H."/>
            <person name="Horiuchi T."/>
        </authorList>
    </citation>
    <scope>NUCLEOTIDE SEQUENCE [LARGE SCALE GENOMIC DNA]</scope>
    <source>
        <strain>K12 / W3110 / ATCC 27325 / DSM 5911</strain>
    </source>
</reference>
<sequence>MSVFPESFLWGGALAANQSEGAFREGDKGLTTVDMIPHGEHRMAVKLGLEKRFQLRDDEFYPSHEATDFYHRYKEDIALMAEMGFKVFRTSIAWSRLFPQGDEITPNQQGIAFYRSVFEECKKYGIEPLVTLCHFDVPMHLVTEYGSWRNRKLVEFFSRYARTCFEAFDGLVKYWLTFNEINIMLHSPFSGAGLVFEEGENQDQVKYQAAHHQLVASALATKIAHEVNPQNQVGCMLAGGNFYPYSCKPEDVWAALEKDRENLFFIDVQARGTYPAYSARVFREKGVTINKAPGDDEILKNTVDFVSFSYYASRCASAEMNANNSSAANVVKSLRNPYLQVSDWGWGIDPLGLRITMNMMYDRYQKPLFLVENGLGAKDEFAANGEINDDYRISYLREHIRAMGEAIADGIPLMGYTTWGCIDLVSASTGEMSKRYGFVFVDRDDAGNGTLTRTRKKSFWWYKKVIASNGEDLE</sequence>
<gene>
    <name type="primary">ascB</name>
    <name type="ordered locus">b2716</name>
    <name type="ordered locus">JW2686</name>
</gene>
<accession>P24240</accession>
<accession>P78104</accession>
<accession>Q2MAB3</accession>
<accession>Q59375</accession>
<proteinExistence type="inferred from homology"/>
<name>ASCB_ECOLI</name>
<organism>
    <name type="scientific">Escherichia coli (strain K12)</name>
    <dbReference type="NCBI Taxonomy" id="83333"/>
    <lineage>
        <taxon>Bacteria</taxon>
        <taxon>Pseudomonadati</taxon>
        <taxon>Pseudomonadota</taxon>
        <taxon>Gammaproteobacteria</taxon>
        <taxon>Enterobacterales</taxon>
        <taxon>Enterobacteriaceae</taxon>
        <taxon>Escherichia</taxon>
    </lineage>
</organism>